<gene>
    <name evidence="1" type="primary">aroA</name>
    <name type="ordered locus">RHECIAT_CH0000975</name>
</gene>
<keyword id="KW-0028">Amino-acid biosynthesis</keyword>
<keyword id="KW-0057">Aromatic amino acid biosynthesis</keyword>
<keyword id="KW-0963">Cytoplasm</keyword>
<keyword id="KW-0808">Transferase</keyword>
<dbReference type="EC" id="2.5.1.19" evidence="1"/>
<dbReference type="EMBL" id="CP001074">
    <property type="protein sequence ID" value="ACE89960.1"/>
    <property type="molecule type" value="Genomic_DNA"/>
</dbReference>
<dbReference type="SMR" id="B3PRH7"/>
<dbReference type="KEGG" id="rec:RHECIAT_CH0000975"/>
<dbReference type="eggNOG" id="COG0128">
    <property type="taxonomic scope" value="Bacteria"/>
</dbReference>
<dbReference type="HOGENOM" id="CLU_024321_0_0_5"/>
<dbReference type="UniPathway" id="UPA00053">
    <property type="reaction ID" value="UER00089"/>
</dbReference>
<dbReference type="Proteomes" id="UP000008817">
    <property type="component" value="Chromosome"/>
</dbReference>
<dbReference type="GO" id="GO:0005737">
    <property type="term" value="C:cytoplasm"/>
    <property type="evidence" value="ECO:0007669"/>
    <property type="project" value="UniProtKB-SubCell"/>
</dbReference>
<dbReference type="GO" id="GO:0003866">
    <property type="term" value="F:3-phosphoshikimate 1-carboxyvinyltransferase activity"/>
    <property type="evidence" value="ECO:0007669"/>
    <property type="project" value="UniProtKB-UniRule"/>
</dbReference>
<dbReference type="GO" id="GO:0008652">
    <property type="term" value="P:amino acid biosynthetic process"/>
    <property type="evidence" value="ECO:0007669"/>
    <property type="project" value="UniProtKB-KW"/>
</dbReference>
<dbReference type="GO" id="GO:0009073">
    <property type="term" value="P:aromatic amino acid family biosynthetic process"/>
    <property type="evidence" value="ECO:0007669"/>
    <property type="project" value="UniProtKB-KW"/>
</dbReference>
<dbReference type="GO" id="GO:0009423">
    <property type="term" value="P:chorismate biosynthetic process"/>
    <property type="evidence" value="ECO:0007669"/>
    <property type="project" value="UniProtKB-UniRule"/>
</dbReference>
<dbReference type="CDD" id="cd01556">
    <property type="entry name" value="EPSP_synthase"/>
    <property type="match status" value="1"/>
</dbReference>
<dbReference type="Gene3D" id="3.65.10.10">
    <property type="entry name" value="Enolpyruvate transferase domain"/>
    <property type="match status" value="2"/>
</dbReference>
<dbReference type="HAMAP" id="MF_00210">
    <property type="entry name" value="EPSP_synth"/>
    <property type="match status" value="1"/>
</dbReference>
<dbReference type="InterPro" id="IPR001986">
    <property type="entry name" value="Enolpyruvate_Tfrase_dom"/>
</dbReference>
<dbReference type="InterPro" id="IPR036968">
    <property type="entry name" value="Enolpyruvate_Tfrase_sf"/>
</dbReference>
<dbReference type="InterPro" id="IPR006264">
    <property type="entry name" value="EPSP_synthase"/>
</dbReference>
<dbReference type="InterPro" id="IPR023193">
    <property type="entry name" value="EPSP_synthase_CS"/>
</dbReference>
<dbReference type="InterPro" id="IPR013792">
    <property type="entry name" value="RNA3'P_cycl/enolpyr_Trfase_a/b"/>
</dbReference>
<dbReference type="NCBIfam" id="TIGR01356">
    <property type="entry name" value="aroA"/>
    <property type="match status" value="1"/>
</dbReference>
<dbReference type="PANTHER" id="PTHR21090">
    <property type="entry name" value="AROM/DEHYDROQUINATE SYNTHASE"/>
    <property type="match status" value="1"/>
</dbReference>
<dbReference type="PANTHER" id="PTHR21090:SF5">
    <property type="entry name" value="PENTAFUNCTIONAL AROM POLYPEPTIDE"/>
    <property type="match status" value="1"/>
</dbReference>
<dbReference type="Pfam" id="PF00275">
    <property type="entry name" value="EPSP_synthase"/>
    <property type="match status" value="1"/>
</dbReference>
<dbReference type="PIRSF" id="PIRSF000505">
    <property type="entry name" value="EPSPS"/>
    <property type="match status" value="1"/>
</dbReference>
<dbReference type="SUPFAM" id="SSF55205">
    <property type="entry name" value="EPT/RTPC-like"/>
    <property type="match status" value="1"/>
</dbReference>
<dbReference type="PROSITE" id="PS00104">
    <property type="entry name" value="EPSP_SYNTHASE_1"/>
    <property type="match status" value="1"/>
</dbReference>
<feature type="chain" id="PRO_1000124699" description="3-phosphoshikimate 1-carboxyvinyltransferase">
    <location>
        <begin position="1"/>
        <end position="420"/>
    </location>
</feature>
<feature type="region of interest" description="Disordered" evidence="2">
    <location>
        <begin position="1"/>
        <end position="24"/>
    </location>
</feature>
<feature type="active site" description="Proton acceptor" evidence="1">
    <location>
        <position position="297"/>
    </location>
</feature>
<feature type="binding site" evidence="1">
    <location>
        <position position="26"/>
    </location>
    <ligand>
        <name>3-phosphoshikimate</name>
        <dbReference type="ChEBI" id="CHEBI:145989"/>
    </ligand>
</feature>
<feature type="binding site" evidence="1">
    <location>
        <position position="26"/>
    </location>
    <ligand>
        <name>phosphoenolpyruvate</name>
        <dbReference type="ChEBI" id="CHEBI:58702"/>
    </ligand>
</feature>
<feature type="binding site" evidence="1">
    <location>
        <position position="27"/>
    </location>
    <ligand>
        <name>3-phosphoshikimate</name>
        <dbReference type="ChEBI" id="CHEBI:145989"/>
    </ligand>
</feature>
<feature type="binding site" evidence="1">
    <location>
        <position position="31"/>
    </location>
    <ligand>
        <name>3-phosphoshikimate</name>
        <dbReference type="ChEBI" id="CHEBI:145989"/>
    </ligand>
</feature>
<feature type="binding site" evidence="1">
    <location>
        <position position="97"/>
    </location>
    <ligand>
        <name>phosphoenolpyruvate</name>
        <dbReference type="ChEBI" id="CHEBI:58702"/>
    </ligand>
</feature>
<feature type="binding site" evidence="1">
    <location>
        <position position="125"/>
    </location>
    <ligand>
        <name>phosphoenolpyruvate</name>
        <dbReference type="ChEBI" id="CHEBI:58702"/>
    </ligand>
</feature>
<feature type="binding site" evidence="1">
    <location>
        <position position="170"/>
    </location>
    <ligand>
        <name>3-phosphoshikimate</name>
        <dbReference type="ChEBI" id="CHEBI:145989"/>
    </ligand>
</feature>
<feature type="binding site" evidence="1">
    <location>
        <position position="171"/>
    </location>
    <ligand>
        <name>3-phosphoshikimate</name>
        <dbReference type="ChEBI" id="CHEBI:145989"/>
    </ligand>
</feature>
<feature type="binding site" evidence="1">
    <location>
        <position position="172"/>
    </location>
    <ligand>
        <name>3-phosphoshikimate</name>
        <dbReference type="ChEBI" id="CHEBI:145989"/>
    </ligand>
</feature>
<feature type="binding site" evidence="1">
    <location>
        <position position="172"/>
    </location>
    <ligand>
        <name>phosphoenolpyruvate</name>
        <dbReference type="ChEBI" id="CHEBI:58702"/>
    </ligand>
</feature>
<feature type="binding site" evidence="1">
    <location>
        <position position="297"/>
    </location>
    <ligand>
        <name>3-phosphoshikimate</name>
        <dbReference type="ChEBI" id="CHEBI:145989"/>
    </ligand>
</feature>
<feature type="binding site" evidence="1">
    <location>
        <position position="320"/>
    </location>
    <ligand>
        <name>3-phosphoshikimate</name>
        <dbReference type="ChEBI" id="CHEBI:145989"/>
    </ligand>
</feature>
<feature type="binding site" evidence="1">
    <location>
        <position position="324"/>
    </location>
    <ligand>
        <name>3-phosphoshikimate</name>
        <dbReference type="ChEBI" id="CHEBI:145989"/>
    </ligand>
</feature>
<feature type="binding site" evidence="1">
    <location>
        <position position="328"/>
    </location>
    <ligand>
        <name>phosphoenolpyruvate</name>
        <dbReference type="ChEBI" id="CHEBI:58702"/>
    </ligand>
</feature>
<feature type="binding site" evidence="1">
    <location>
        <position position="375"/>
    </location>
    <ligand>
        <name>phosphoenolpyruvate</name>
        <dbReference type="ChEBI" id="CHEBI:58702"/>
    </ligand>
</feature>
<feature type="binding site" evidence="1">
    <location>
        <position position="400"/>
    </location>
    <ligand>
        <name>phosphoenolpyruvate</name>
        <dbReference type="ChEBI" id="CHEBI:58702"/>
    </ligand>
</feature>
<organism>
    <name type="scientific">Rhizobium etli (strain CIAT 652)</name>
    <dbReference type="NCBI Taxonomy" id="491916"/>
    <lineage>
        <taxon>Bacteria</taxon>
        <taxon>Pseudomonadati</taxon>
        <taxon>Pseudomonadota</taxon>
        <taxon>Alphaproteobacteria</taxon>
        <taxon>Hyphomicrobiales</taxon>
        <taxon>Rhizobiaceae</taxon>
        <taxon>Rhizobium/Agrobacterium group</taxon>
        <taxon>Rhizobium</taxon>
    </lineage>
</organism>
<evidence type="ECO:0000255" key="1">
    <source>
        <dbReference type="HAMAP-Rule" id="MF_00210"/>
    </source>
</evidence>
<evidence type="ECO:0000256" key="2">
    <source>
        <dbReference type="SAM" id="MobiDB-lite"/>
    </source>
</evidence>
<protein>
    <recommendedName>
        <fullName evidence="1">3-phosphoshikimate 1-carboxyvinyltransferase</fullName>
        <ecNumber evidence="1">2.5.1.19</ecNumber>
    </recommendedName>
    <alternativeName>
        <fullName evidence="1">5-enolpyruvylshikimate-3-phosphate synthase</fullName>
        <shortName evidence="1">EPSP synthase</shortName>
        <shortName evidence="1">EPSPS</shortName>
    </alternativeName>
</protein>
<proteinExistence type="inferred from homology"/>
<comment type="function">
    <text evidence="1">Catalyzes the transfer of the enolpyruvyl moiety of phosphoenolpyruvate (PEP) to the 5-hydroxyl of shikimate-3-phosphate (S3P) to produce enolpyruvyl shikimate-3-phosphate and inorganic phosphate.</text>
</comment>
<comment type="catalytic activity">
    <reaction evidence="1">
        <text>3-phosphoshikimate + phosphoenolpyruvate = 5-O-(1-carboxyvinyl)-3-phosphoshikimate + phosphate</text>
        <dbReference type="Rhea" id="RHEA:21256"/>
        <dbReference type="ChEBI" id="CHEBI:43474"/>
        <dbReference type="ChEBI" id="CHEBI:57701"/>
        <dbReference type="ChEBI" id="CHEBI:58702"/>
        <dbReference type="ChEBI" id="CHEBI:145989"/>
        <dbReference type="EC" id="2.5.1.19"/>
    </reaction>
    <physiologicalReaction direction="left-to-right" evidence="1">
        <dbReference type="Rhea" id="RHEA:21257"/>
    </physiologicalReaction>
</comment>
<comment type="pathway">
    <text evidence="1">Metabolic intermediate biosynthesis; chorismate biosynthesis; chorismate from D-erythrose 4-phosphate and phosphoenolpyruvate: step 6/7.</text>
</comment>
<comment type="subunit">
    <text evidence="1">Monomer.</text>
</comment>
<comment type="subcellular location">
    <subcellularLocation>
        <location evidence="1">Cytoplasm</location>
    </subcellularLocation>
</comment>
<comment type="similarity">
    <text evidence="1">Belongs to the EPSP synthase family.</text>
</comment>
<accession>B3PRH7</accession>
<reference key="1">
    <citation type="journal article" date="2010" name="Appl. Environ. Microbiol.">
        <title>Conserved symbiotic plasmid DNA sequences in the multireplicon pangenomic structure of Rhizobium etli.</title>
        <authorList>
            <person name="Gonzalez V."/>
            <person name="Acosta J.L."/>
            <person name="Santamaria R.I."/>
            <person name="Bustos P."/>
            <person name="Fernandez J.L."/>
            <person name="Hernandez Gonzalez I.L."/>
            <person name="Diaz R."/>
            <person name="Flores M."/>
            <person name="Palacios R."/>
            <person name="Mora J."/>
            <person name="Davila G."/>
        </authorList>
    </citation>
    <scope>NUCLEOTIDE SEQUENCE [LARGE SCALE GENOMIC DNA]</scope>
    <source>
        <strain>CIAT 652</strain>
    </source>
</reference>
<name>AROA_RHIE6</name>
<sequence length="420" mass="44354">MTRTAKLTIIPPGRPLSGRAMPPGSKSITNRALLLAGLAKGTSRMTGALKSDDTRYMADALRAMGVAIDEPDDTTFVVTGSGRLMPPKAPLFLGNAGTATRFLTAAAALVDGTVVVDGDEHMRKRPIGPLVEAMRTLGIDVSADTGCPPVTVRGTGRFEADRILIDGGLSSQYVSALLMMAAGGDRPVDIELVGEDIGALGYIDLTTAAMKAFGARVEKTSPVTWRVEPTGYRAADFVIEPDASAATYLWAAEVLSDGQIDLGVPNDAFTQPDAKAYETIAKFPHLPAEIDGSQMQDAVPTIAVLAAFNETPVRFVGIANLRVKECDRIRALSTGLNNIREGLAVEEGDDLIVHSDPALAGQTLPAEIDTFADHRIAMSFALAGLKIDGITILDPDCVGKTFPAYWRTLAALGVTYQGKD</sequence>